<feature type="chain" id="PRO_1000012825" description="ATP-dependent protease ATPase subunit HslU">
    <location>
        <begin position="1"/>
        <end position="441"/>
    </location>
</feature>
<feature type="binding site" evidence="1">
    <location>
        <position position="18"/>
    </location>
    <ligand>
        <name>ATP</name>
        <dbReference type="ChEBI" id="CHEBI:30616"/>
    </ligand>
</feature>
<feature type="binding site" evidence="1">
    <location>
        <begin position="60"/>
        <end position="65"/>
    </location>
    <ligand>
        <name>ATP</name>
        <dbReference type="ChEBI" id="CHEBI:30616"/>
    </ligand>
</feature>
<feature type="binding site" evidence="1">
    <location>
        <position position="254"/>
    </location>
    <ligand>
        <name>ATP</name>
        <dbReference type="ChEBI" id="CHEBI:30616"/>
    </ligand>
</feature>
<feature type="binding site" evidence="1">
    <location>
        <position position="319"/>
    </location>
    <ligand>
        <name>ATP</name>
        <dbReference type="ChEBI" id="CHEBI:30616"/>
    </ligand>
</feature>
<feature type="binding site" evidence="1">
    <location>
        <position position="391"/>
    </location>
    <ligand>
        <name>ATP</name>
        <dbReference type="ChEBI" id="CHEBI:30616"/>
    </ligand>
</feature>
<comment type="function">
    <text evidence="1">ATPase subunit of a proteasome-like degradation complex; this subunit has chaperone activity. The binding of ATP and its subsequent hydrolysis by HslU are essential for unfolding of protein substrates subsequently hydrolyzed by HslV. HslU recognizes the N-terminal part of its protein substrates and unfolds these before they are guided to HslV for hydrolysis.</text>
</comment>
<comment type="subunit">
    <text evidence="1">A double ring-shaped homohexamer of HslV is capped on each side by a ring-shaped HslU homohexamer. The assembly of the HslU/HslV complex is dependent on binding of ATP.</text>
</comment>
<comment type="subcellular location">
    <subcellularLocation>
        <location evidence="1">Cytoplasm</location>
    </subcellularLocation>
</comment>
<comment type="similarity">
    <text evidence="1">Belongs to the ClpX chaperone family. HslU subfamily.</text>
</comment>
<accession>A1WRK1</accession>
<proteinExistence type="inferred from homology"/>
<reference key="1">
    <citation type="submission" date="2006-12" db="EMBL/GenBank/DDBJ databases">
        <title>Complete sequence of chromosome 1 of Verminephrobacter eiseniae EF01-2.</title>
        <authorList>
            <person name="Copeland A."/>
            <person name="Lucas S."/>
            <person name="Lapidus A."/>
            <person name="Barry K."/>
            <person name="Detter J.C."/>
            <person name="Glavina del Rio T."/>
            <person name="Dalin E."/>
            <person name="Tice H."/>
            <person name="Pitluck S."/>
            <person name="Chertkov O."/>
            <person name="Brettin T."/>
            <person name="Bruce D."/>
            <person name="Han C."/>
            <person name="Tapia R."/>
            <person name="Gilna P."/>
            <person name="Schmutz J."/>
            <person name="Larimer F."/>
            <person name="Land M."/>
            <person name="Hauser L."/>
            <person name="Kyrpides N."/>
            <person name="Kim E."/>
            <person name="Stahl D."/>
            <person name="Richardson P."/>
        </authorList>
    </citation>
    <scope>NUCLEOTIDE SEQUENCE [LARGE SCALE GENOMIC DNA]</scope>
    <source>
        <strain>EF01-2</strain>
    </source>
</reference>
<organism>
    <name type="scientific">Verminephrobacter eiseniae (strain EF01-2)</name>
    <dbReference type="NCBI Taxonomy" id="391735"/>
    <lineage>
        <taxon>Bacteria</taxon>
        <taxon>Pseudomonadati</taxon>
        <taxon>Pseudomonadota</taxon>
        <taxon>Betaproteobacteria</taxon>
        <taxon>Burkholderiales</taxon>
        <taxon>Comamonadaceae</taxon>
        <taxon>Verminephrobacter</taxon>
    </lineage>
</organism>
<dbReference type="EMBL" id="CP000542">
    <property type="protein sequence ID" value="ABM60258.1"/>
    <property type="molecule type" value="Genomic_DNA"/>
</dbReference>
<dbReference type="RefSeq" id="WP_011812242.1">
    <property type="nucleotide sequence ID" value="NC_008786.1"/>
</dbReference>
<dbReference type="SMR" id="A1WRK1"/>
<dbReference type="STRING" id="391735.Veis_4560"/>
<dbReference type="GeneID" id="76462853"/>
<dbReference type="KEGG" id="vei:Veis_4560"/>
<dbReference type="eggNOG" id="COG1220">
    <property type="taxonomic scope" value="Bacteria"/>
</dbReference>
<dbReference type="HOGENOM" id="CLU_033123_0_0_4"/>
<dbReference type="OrthoDB" id="9804062at2"/>
<dbReference type="Proteomes" id="UP000000374">
    <property type="component" value="Chromosome"/>
</dbReference>
<dbReference type="GO" id="GO:0009376">
    <property type="term" value="C:HslUV protease complex"/>
    <property type="evidence" value="ECO:0007669"/>
    <property type="project" value="UniProtKB-UniRule"/>
</dbReference>
<dbReference type="GO" id="GO:0005524">
    <property type="term" value="F:ATP binding"/>
    <property type="evidence" value="ECO:0007669"/>
    <property type="project" value="UniProtKB-UniRule"/>
</dbReference>
<dbReference type="GO" id="GO:0016887">
    <property type="term" value="F:ATP hydrolysis activity"/>
    <property type="evidence" value="ECO:0007669"/>
    <property type="project" value="InterPro"/>
</dbReference>
<dbReference type="GO" id="GO:0008233">
    <property type="term" value="F:peptidase activity"/>
    <property type="evidence" value="ECO:0007669"/>
    <property type="project" value="InterPro"/>
</dbReference>
<dbReference type="GO" id="GO:0036402">
    <property type="term" value="F:proteasome-activating activity"/>
    <property type="evidence" value="ECO:0007669"/>
    <property type="project" value="UniProtKB-UniRule"/>
</dbReference>
<dbReference type="GO" id="GO:0043335">
    <property type="term" value="P:protein unfolding"/>
    <property type="evidence" value="ECO:0007669"/>
    <property type="project" value="UniProtKB-UniRule"/>
</dbReference>
<dbReference type="GO" id="GO:0051603">
    <property type="term" value="P:proteolysis involved in protein catabolic process"/>
    <property type="evidence" value="ECO:0007669"/>
    <property type="project" value="TreeGrafter"/>
</dbReference>
<dbReference type="CDD" id="cd19498">
    <property type="entry name" value="RecA-like_HslU"/>
    <property type="match status" value="1"/>
</dbReference>
<dbReference type="FunFam" id="3.40.50.300:FF:000213">
    <property type="entry name" value="ATP-dependent protease ATPase subunit HslU"/>
    <property type="match status" value="1"/>
</dbReference>
<dbReference type="FunFam" id="3.40.50.300:FF:000220">
    <property type="entry name" value="ATP-dependent protease ATPase subunit HslU"/>
    <property type="match status" value="1"/>
</dbReference>
<dbReference type="Gene3D" id="1.10.8.60">
    <property type="match status" value="1"/>
</dbReference>
<dbReference type="Gene3D" id="1.10.8.10">
    <property type="entry name" value="DNA helicase RuvA subunit, C-terminal domain"/>
    <property type="match status" value="1"/>
</dbReference>
<dbReference type="Gene3D" id="3.40.50.300">
    <property type="entry name" value="P-loop containing nucleotide triphosphate hydrolases"/>
    <property type="match status" value="2"/>
</dbReference>
<dbReference type="HAMAP" id="MF_00249">
    <property type="entry name" value="HslU"/>
    <property type="match status" value="1"/>
</dbReference>
<dbReference type="InterPro" id="IPR003593">
    <property type="entry name" value="AAA+_ATPase"/>
</dbReference>
<dbReference type="InterPro" id="IPR050052">
    <property type="entry name" value="ATP-dep_Clp_protease_ClpX"/>
</dbReference>
<dbReference type="InterPro" id="IPR003959">
    <property type="entry name" value="ATPase_AAA_core"/>
</dbReference>
<dbReference type="InterPro" id="IPR019489">
    <property type="entry name" value="Clp_ATPase_C"/>
</dbReference>
<dbReference type="InterPro" id="IPR004491">
    <property type="entry name" value="HslU"/>
</dbReference>
<dbReference type="InterPro" id="IPR027417">
    <property type="entry name" value="P-loop_NTPase"/>
</dbReference>
<dbReference type="NCBIfam" id="TIGR00390">
    <property type="entry name" value="hslU"/>
    <property type="match status" value="1"/>
</dbReference>
<dbReference type="NCBIfam" id="NF003544">
    <property type="entry name" value="PRK05201.1"/>
    <property type="match status" value="1"/>
</dbReference>
<dbReference type="PANTHER" id="PTHR48102">
    <property type="entry name" value="ATP-DEPENDENT CLP PROTEASE ATP-BINDING SUBUNIT CLPX-LIKE, MITOCHONDRIAL-RELATED"/>
    <property type="match status" value="1"/>
</dbReference>
<dbReference type="PANTHER" id="PTHR48102:SF3">
    <property type="entry name" value="ATP-DEPENDENT PROTEASE ATPASE SUBUNIT HSLU"/>
    <property type="match status" value="1"/>
</dbReference>
<dbReference type="Pfam" id="PF00004">
    <property type="entry name" value="AAA"/>
    <property type="match status" value="1"/>
</dbReference>
<dbReference type="Pfam" id="PF07724">
    <property type="entry name" value="AAA_2"/>
    <property type="match status" value="1"/>
</dbReference>
<dbReference type="SMART" id="SM00382">
    <property type="entry name" value="AAA"/>
    <property type="match status" value="1"/>
</dbReference>
<dbReference type="SMART" id="SM01086">
    <property type="entry name" value="ClpB_D2-small"/>
    <property type="match status" value="1"/>
</dbReference>
<dbReference type="SUPFAM" id="SSF52540">
    <property type="entry name" value="P-loop containing nucleoside triphosphate hydrolases"/>
    <property type="match status" value="1"/>
</dbReference>
<protein>
    <recommendedName>
        <fullName evidence="1">ATP-dependent protease ATPase subunit HslU</fullName>
    </recommendedName>
    <alternativeName>
        <fullName evidence="1">Unfoldase HslU</fullName>
    </alternativeName>
</protein>
<gene>
    <name evidence="1" type="primary">hslU</name>
    <name type="ordered locus">Veis_4560</name>
</gene>
<evidence type="ECO:0000255" key="1">
    <source>
        <dbReference type="HAMAP-Rule" id="MF_00249"/>
    </source>
</evidence>
<sequence length="441" mass="49357">MTSMTPQEIVSELDKHIVGQSSAKRAVAIALRNRWRRQQVQGSLRQEITPKNILMIGPTGVGKTEIARRLAKLADAPFIKVEATKFTEVGYVGKDVDSIIRDLADMAVKQTRESEMKKVRARAEDAAEDRILDVLIPPPRGADGAEPAADGTTRQMFRKKLREGLLDDKDIEIDVTESRPHLEIMGPQGMEEMTEQLRSMFSQFGQDKRRTRKLKIAEAMKLLTDEEAGKLVNEEEIKTRALANAEQNGIVFIDEIDKVATRQETSGADVSRQGVQRDLLPLVEGTTVSTKYGMIKTDHILFIASGAFHLSRPSDLIPELQGRFPIRVELESLSVQDFEAILTQTHASLVKQYQALLATEDVTLAFVPQGITRLACIAFEVNERTENIGARRLSTVMERLLDEVSFDATRLSGQTVTIDEGYVDQRLQQLSLNEDLSRYIL</sequence>
<keyword id="KW-0067">ATP-binding</keyword>
<keyword id="KW-0143">Chaperone</keyword>
<keyword id="KW-0963">Cytoplasm</keyword>
<keyword id="KW-0547">Nucleotide-binding</keyword>
<keyword id="KW-1185">Reference proteome</keyword>
<keyword id="KW-0346">Stress response</keyword>
<name>HSLU_VEREI</name>